<sequence>MSEVINVNCPTCGKAVVWGEISPFRPFCCKRCQLIDLGEWAAEEKRIPSEGGLSDSDDWSEELK</sequence>
<reference key="1">
    <citation type="journal article" date="2010" name="PLoS Genet.">
        <title>Genome sequence of the plant growth promoting endophytic bacterium Enterobacter sp. 638.</title>
        <authorList>
            <person name="Taghavi S."/>
            <person name="van der Lelie D."/>
            <person name="Hoffman A."/>
            <person name="Zhang Y.B."/>
            <person name="Walla M.D."/>
            <person name="Vangronsveld J."/>
            <person name="Newman L."/>
            <person name="Monchy S."/>
        </authorList>
    </citation>
    <scope>NUCLEOTIDE SEQUENCE [LARGE SCALE GENOMIC DNA]</scope>
    <source>
        <strain>638</strain>
    </source>
</reference>
<evidence type="ECO:0000255" key="1">
    <source>
        <dbReference type="HAMAP-Rule" id="MF_00649"/>
    </source>
</evidence>
<feature type="chain" id="PRO_1000061466" description="DNA gyrase inhibitor YacG">
    <location>
        <begin position="1"/>
        <end position="64"/>
    </location>
</feature>
<feature type="binding site" evidence="1">
    <location>
        <position position="9"/>
    </location>
    <ligand>
        <name>Zn(2+)</name>
        <dbReference type="ChEBI" id="CHEBI:29105"/>
    </ligand>
</feature>
<feature type="binding site" evidence="1">
    <location>
        <position position="12"/>
    </location>
    <ligand>
        <name>Zn(2+)</name>
        <dbReference type="ChEBI" id="CHEBI:29105"/>
    </ligand>
</feature>
<feature type="binding site" evidence="1">
    <location>
        <position position="28"/>
    </location>
    <ligand>
        <name>Zn(2+)</name>
        <dbReference type="ChEBI" id="CHEBI:29105"/>
    </ligand>
</feature>
<feature type="binding site" evidence="1">
    <location>
        <position position="32"/>
    </location>
    <ligand>
        <name>Zn(2+)</name>
        <dbReference type="ChEBI" id="CHEBI:29105"/>
    </ligand>
</feature>
<proteinExistence type="inferred from homology"/>
<keyword id="KW-0479">Metal-binding</keyword>
<keyword id="KW-0862">Zinc</keyword>
<comment type="function">
    <text evidence="1">Inhibits all the catalytic activities of DNA gyrase by preventing its interaction with DNA. Acts by binding directly to the C-terminal domain of GyrB, which probably disrupts DNA binding by the gyrase.</text>
</comment>
<comment type="cofactor">
    <cofactor evidence="1">
        <name>Zn(2+)</name>
        <dbReference type="ChEBI" id="CHEBI:29105"/>
    </cofactor>
    <text evidence="1">Binds 1 zinc ion.</text>
</comment>
<comment type="subunit">
    <text evidence="1">Interacts with GyrB.</text>
</comment>
<comment type="similarity">
    <text evidence="1">Belongs to the DNA gyrase inhibitor YacG family.</text>
</comment>
<accession>A4W6K3</accession>
<name>YACG_ENT38</name>
<gene>
    <name evidence="1" type="primary">yacG</name>
    <name type="ordered locus">Ent638_0646</name>
</gene>
<organism>
    <name type="scientific">Enterobacter sp. (strain 638)</name>
    <dbReference type="NCBI Taxonomy" id="399742"/>
    <lineage>
        <taxon>Bacteria</taxon>
        <taxon>Pseudomonadati</taxon>
        <taxon>Pseudomonadota</taxon>
        <taxon>Gammaproteobacteria</taxon>
        <taxon>Enterobacterales</taxon>
        <taxon>Enterobacteriaceae</taxon>
        <taxon>Enterobacter</taxon>
    </lineage>
</organism>
<protein>
    <recommendedName>
        <fullName evidence="1">DNA gyrase inhibitor YacG</fullName>
    </recommendedName>
</protein>
<dbReference type="EMBL" id="CP000653">
    <property type="protein sequence ID" value="ABP59333.1"/>
    <property type="molecule type" value="Genomic_DNA"/>
</dbReference>
<dbReference type="RefSeq" id="WP_012016054.1">
    <property type="nucleotide sequence ID" value="NC_009436.1"/>
</dbReference>
<dbReference type="SMR" id="A4W6K3"/>
<dbReference type="STRING" id="399742.Ent638_0646"/>
<dbReference type="KEGG" id="ent:Ent638_0646"/>
<dbReference type="eggNOG" id="COG3024">
    <property type="taxonomic scope" value="Bacteria"/>
</dbReference>
<dbReference type="HOGENOM" id="CLU_178280_3_1_6"/>
<dbReference type="OrthoDB" id="9809663at2"/>
<dbReference type="Proteomes" id="UP000000230">
    <property type="component" value="Chromosome"/>
</dbReference>
<dbReference type="GO" id="GO:0008657">
    <property type="term" value="F:DNA topoisomerase type II (double strand cut, ATP-hydrolyzing) inhibitor activity"/>
    <property type="evidence" value="ECO:0007669"/>
    <property type="project" value="UniProtKB-UniRule"/>
</dbReference>
<dbReference type="GO" id="GO:0008270">
    <property type="term" value="F:zinc ion binding"/>
    <property type="evidence" value="ECO:0007669"/>
    <property type="project" value="UniProtKB-UniRule"/>
</dbReference>
<dbReference type="GO" id="GO:0006355">
    <property type="term" value="P:regulation of DNA-templated transcription"/>
    <property type="evidence" value="ECO:0007669"/>
    <property type="project" value="InterPro"/>
</dbReference>
<dbReference type="Gene3D" id="3.30.50.10">
    <property type="entry name" value="Erythroid Transcription Factor GATA-1, subunit A"/>
    <property type="match status" value="1"/>
</dbReference>
<dbReference type="HAMAP" id="MF_00649">
    <property type="entry name" value="DNA_gyrase_inhibitor_YacG"/>
    <property type="match status" value="1"/>
</dbReference>
<dbReference type="InterPro" id="IPR005584">
    <property type="entry name" value="DNA_gyrase_inhibitor_YacG"/>
</dbReference>
<dbReference type="InterPro" id="IPR013088">
    <property type="entry name" value="Znf_NHR/GATA"/>
</dbReference>
<dbReference type="NCBIfam" id="NF001638">
    <property type="entry name" value="PRK00418.1"/>
    <property type="match status" value="1"/>
</dbReference>
<dbReference type="PANTHER" id="PTHR36150">
    <property type="entry name" value="DNA GYRASE INHIBITOR YACG"/>
    <property type="match status" value="1"/>
</dbReference>
<dbReference type="PANTHER" id="PTHR36150:SF1">
    <property type="entry name" value="DNA GYRASE INHIBITOR YACG"/>
    <property type="match status" value="1"/>
</dbReference>
<dbReference type="Pfam" id="PF03884">
    <property type="entry name" value="YacG"/>
    <property type="match status" value="1"/>
</dbReference>
<dbReference type="SUPFAM" id="SSF57716">
    <property type="entry name" value="Glucocorticoid receptor-like (DNA-binding domain)"/>
    <property type="match status" value="1"/>
</dbReference>